<evidence type="ECO:0000250" key="1"/>
<evidence type="ECO:0000255" key="2">
    <source>
        <dbReference type="HAMAP-Rule" id="MF_01320"/>
    </source>
</evidence>
<evidence type="ECO:0000256" key="3">
    <source>
        <dbReference type="SAM" id="MobiDB-lite"/>
    </source>
</evidence>
<evidence type="ECO:0000305" key="4"/>
<gene>
    <name type="primary">rpl2</name>
</gene>
<protein>
    <recommendedName>
        <fullName evidence="2">Large ribosomal subunit protein uL2c</fullName>
    </recommendedName>
    <alternativeName>
        <fullName evidence="4">50S ribosomal protein L2, chloroplastic</fullName>
    </alternativeName>
</protein>
<geneLocation type="chloroplast"/>
<reference key="1">
    <citation type="journal article" date="2008" name="BMC Plant Biol.">
        <title>Complete nucleotide sequence of the Cryptomeria japonica D. Don. chloroplast genome and comparative chloroplast genomics: diversified genomic structure of coniferous species.</title>
        <authorList>
            <person name="Hirao T."/>
            <person name="Watanabe A."/>
            <person name="Kurita M."/>
            <person name="Kondo T."/>
            <person name="Takata K."/>
        </authorList>
    </citation>
    <scope>NUCLEOTIDE SEQUENCE [LARGE SCALE GENOMIC DNA]</scope>
</reference>
<keyword id="KW-0150">Chloroplast</keyword>
<keyword id="KW-0934">Plastid</keyword>
<keyword id="KW-0687">Ribonucleoprotein</keyword>
<keyword id="KW-0689">Ribosomal protein</keyword>
<proteinExistence type="inferred from homology"/>
<dbReference type="EMBL" id="AP009377">
    <property type="protein sequence ID" value="BAG16648.1"/>
    <property type="molecule type" value="Genomic_DNA"/>
</dbReference>
<dbReference type="RefSeq" id="YP_001806650.1">
    <property type="nucleotide sequence ID" value="NC_010548.1"/>
</dbReference>
<dbReference type="SMR" id="B1VKD7"/>
<dbReference type="GeneID" id="6166540"/>
<dbReference type="KEGG" id="cjf:6166540"/>
<dbReference type="OrthoDB" id="563959at2759"/>
<dbReference type="GO" id="GO:0009507">
    <property type="term" value="C:chloroplast"/>
    <property type="evidence" value="ECO:0007669"/>
    <property type="project" value="UniProtKB-SubCell"/>
</dbReference>
<dbReference type="GO" id="GO:0005762">
    <property type="term" value="C:mitochondrial large ribosomal subunit"/>
    <property type="evidence" value="ECO:0007669"/>
    <property type="project" value="TreeGrafter"/>
</dbReference>
<dbReference type="GO" id="GO:0019843">
    <property type="term" value="F:rRNA binding"/>
    <property type="evidence" value="ECO:0007669"/>
    <property type="project" value="UniProtKB-UniRule"/>
</dbReference>
<dbReference type="GO" id="GO:0003735">
    <property type="term" value="F:structural constituent of ribosome"/>
    <property type="evidence" value="ECO:0007669"/>
    <property type="project" value="InterPro"/>
</dbReference>
<dbReference type="GO" id="GO:0016740">
    <property type="term" value="F:transferase activity"/>
    <property type="evidence" value="ECO:0007669"/>
    <property type="project" value="InterPro"/>
</dbReference>
<dbReference type="GO" id="GO:0032543">
    <property type="term" value="P:mitochondrial translation"/>
    <property type="evidence" value="ECO:0007669"/>
    <property type="project" value="TreeGrafter"/>
</dbReference>
<dbReference type="FunFam" id="4.10.950.10:FF:000001">
    <property type="entry name" value="50S ribosomal protein L2"/>
    <property type="match status" value="1"/>
</dbReference>
<dbReference type="FunFam" id="2.30.30.30:FF:000008">
    <property type="entry name" value="50S ribosomal protein L2, chloroplastic"/>
    <property type="match status" value="1"/>
</dbReference>
<dbReference type="FunFam" id="2.40.50.140:FF:000029">
    <property type="entry name" value="50S ribosomal protein L2, chloroplastic"/>
    <property type="match status" value="1"/>
</dbReference>
<dbReference type="Gene3D" id="2.30.30.30">
    <property type="match status" value="1"/>
</dbReference>
<dbReference type="Gene3D" id="2.40.50.140">
    <property type="entry name" value="Nucleic acid-binding proteins"/>
    <property type="match status" value="1"/>
</dbReference>
<dbReference type="Gene3D" id="4.10.950.10">
    <property type="entry name" value="Ribosomal protein L2, domain 3"/>
    <property type="match status" value="1"/>
</dbReference>
<dbReference type="HAMAP" id="MF_01320_B">
    <property type="entry name" value="Ribosomal_uL2_B"/>
    <property type="match status" value="1"/>
</dbReference>
<dbReference type="InterPro" id="IPR012340">
    <property type="entry name" value="NA-bd_OB-fold"/>
</dbReference>
<dbReference type="InterPro" id="IPR014722">
    <property type="entry name" value="Rib_uL2_dom2"/>
</dbReference>
<dbReference type="InterPro" id="IPR002171">
    <property type="entry name" value="Ribosomal_uL2"/>
</dbReference>
<dbReference type="InterPro" id="IPR005880">
    <property type="entry name" value="Ribosomal_uL2_bac/org-type"/>
</dbReference>
<dbReference type="InterPro" id="IPR022669">
    <property type="entry name" value="Ribosomal_uL2_C"/>
</dbReference>
<dbReference type="InterPro" id="IPR022671">
    <property type="entry name" value="Ribosomal_uL2_CS"/>
</dbReference>
<dbReference type="InterPro" id="IPR014726">
    <property type="entry name" value="Ribosomal_uL2_dom3"/>
</dbReference>
<dbReference type="InterPro" id="IPR022666">
    <property type="entry name" value="Ribosomal_uL2_RNA-bd_dom"/>
</dbReference>
<dbReference type="InterPro" id="IPR008991">
    <property type="entry name" value="Translation_prot_SH3-like_sf"/>
</dbReference>
<dbReference type="NCBIfam" id="TIGR01171">
    <property type="entry name" value="rplB_bact"/>
    <property type="match status" value="1"/>
</dbReference>
<dbReference type="PANTHER" id="PTHR13691:SF5">
    <property type="entry name" value="LARGE RIBOSOMAL SUBUNIT PROTEIN UL2M"/>
    <property type="match status" value="1"/>
</dbReference>
<dbReference type="PANTHER" id="PTHR13691">
    <property type="entry name" value="RIBOSOMAL PROTEIN L2"/>
    <property type="match status" value="1"/>
</dbReference>
<dbReference type="Pfam" id="PF00181">
    <property type="entry name" value="Ribosomal_L2"/>
    <property type="match status" value="1"/>
</dbReference>
<dbReference type="Pfam" id="PF03947">
    <property type="entry name" value="Ribosomal_L2_C"/>
    <property type="match status" value="1"/>
</dbReference>
<dbReference type="PIRSF" id="PIRSF002158">
    <property type="entry name" value="Ribosomal_L2"/>
    <property type="match status" value="1"/>
</dbReference>
<dbReference type="SMART" id="SM01383">
    <property type="entry name" value="Ribosomal_L2"/>
    <property type="match status" value="1"/>
</dbReference>
<dbReference type="SMART" id="SM01382">
    <property type="entry name" value="Ribosomal_L2_C"/>
    <property type="match status" value="1"/>
</dbReference>
<dbReference type="SUPFAM" id="SSF50249">
    <property type="entry name" value="Nucleic acid-binding proteins"/>
    <property type="match status" value="1"/>
</dbReference>
<dbReference type="SUPFAM" id="SSF50104">
    <property type="entry name" value="Translation proteins SH3-like domain"/>
    <property type="match status" value="1"/>
</dbReference>
<dbReference type="PROSITE" id="PS00467">
    <property type="entry name" value="RIBOSOMAL_L2"/>
    <property type="match status" value="1"/>
</dbReference>
<name>RK2_CRYJA</name>
<organism>
    <name type="scientific">Cryptomeria japonica</name>
    <name type="common">Japanese cedar</name>
    <name type="synonym">Cupressus japonica</name>
    <dbReference type="NCBI Taxonomy" id="3369"/>
    <lineage>
        <taxon>Eukaryota</taxon>
        <taxon>Viridiplantae</taxon>
        <taxon>Streptophyta</taxon>
        <taxon>Embryophyta</taxon>
        <taxon>Tracheophyta</taxon>
        <taxon>Spermatophyta</taxon>
        <taxon>Pinopsida</taxon>
        <taxon>Pinidae</taxon>
        <taxon>Conifers II</taxon>
        <taxon>Cupressales</taxon>
        <taxon>Cupressaceae</taxon>
        <taxon>Cryptomeria</taxon>
    </lineage>
</organism>
<feature type="chain" id="PRO_0000342538" description="Large ribosomal subunit protein uL2c">
    <location>
        <begin position="1"/>
        <end position="277"/>
    </location>
</feature>
<feature type="region of interest" description="Disordered" evidence="3">
    <location>
        <begin position="1"/>
        <end position="47"/>
    </location>
</feature>
<feature type="region of interest" description="Disordered" evidence="3">
    <location>
        <begin position="254"/>
        <end position="277"/>
    </location>
</feature>
<feature type="compositionally biased region" description="Polar residues" evidence="3">
    <location>
        <begin position="1"/>
        <end position="11"/>
    </location>
</feature>
<sequence>MNTRSYSTFTPGTRDKSLSSFDGKVKSHPQKKLTSGQHRCGKGRNNSGIITIRHRGGGHKRLYRQIDFRRSEKNNILGKIVTIESDPNRSAYICLVHYRDGQKTYILHPRGIMIGDTILSGPRAPISMGNALPLTNIPLGTTIHNVEVQVGKGGQLARAAGAVAELIAKEGRLTTLRLPSGEVRLISENCLATIGQVGNVKWKNRTLSKAGSKRWLGKRPEVRGVVMNAVDHPHGGGEGRAPIGRKKPLTPWGYSALGKKSRKRNKYSDVSILRRRK</sequence>
<comment type="subunit">
    <text evidence="1">Part of the 50S ribosomal subunit.</text>
</comment>
<comment type="subcellular location">
    <subcellularLocation>
        <location>Plastid</location>
        <location>Chloroplast</location>
    </subcellularLocation>
</comment>
<comment type="similarity">
    <text evidence="4">Belongs to the universal ribosomal protein uL2 family.</text>
</comment>
<accession>B1VKD7</accession>